<dbReference type="EMBL" id="BA000016">
    <property type="protein sequence ID" value="BAB81134.1"/>
    <property type="molecule type" value="Genomic_DNA"/>
</dbReference>
<dbReference type="RefSeq" id="WP_011010440.1">
    <property type="nucleotide sequence ID" value="NC_003366.1"/>
</dbReference>
<dbReference type="SMR" id="Q8XKG8"/>
<dbReference type="STRING" id="195102.gene:10490692"/>
<dbReference type="GeneID" id="93002032"/>
<dbReference type="KEGG" id="cpe:CPE1428"/>
<dbReference type="HOGENOM" id="CLU_005070_4_2_9"/>
<dbReference type="Proteomes" id="UP000000818">
    <property type="component" value="Chromosome"/>
</dbReference>
<dbReference type="GO" id="GO:0005737">
    <property type="term" value="C:cytoplasm"/>
    <property type="evidence" value="ECO:0007669"/>
    <property type="project" value="UniProtKB-SubCell"/>
</dbReference>
<dbReference type="GO" id="GO:0005524">
    <property type="term" value="F:ATP binding"/>
    <property type="evidence" value="ECO:0007669"/>
    <property type="project" value="UniProtKB-KW"/>
</dbReference>
<dbReference type="GO" id="GO:0016887">
    <property type="term" value="F:ATP hydrolysis activity"/>
    <property type="evidence" value="ECO:0007669"/>
    <property type="project" value="InterPro"/>
</dbReference>
<dbReference type="GO" id="GO:0034605">
    <property type="term" value="P:cellular response to heat"/>
    <property type="evidence" value="ECO:0007669"/>
    <property type="project" value="TreeGrafter"/>
</dbReference>
<dbReference type="GO" id="GO:0042026">
    <property type="term" value="P:protein refolding"/>
    <property type="evidence" value="ECO:0007669"/>
    <property type="project" value="InterPro"/>
</dbReference>
<dbReference type="CDD" id="cd00009">
    <property type="entry name" value="AAA"/>
    <property type="match status" value="1"/>
</dbReference>
<dbReference type="CDD" id="cd19499">
    <property type="entry name" value="RecA-like_ClpB_Hsp104-like"/>
    <property type="match status" value="1"/>
</dbReference>
<dbReference type="FunFam" id="1.10.8.60:FF:000017">
    <property type="entry name" value="ATP-dependent chaperone ClpB"/>
    <property type="match status" value="1"/>
</dbReference>
<dbReference type="FunFam" id="3.40.50.300:FF:000120">
    <property type="entry name" value="ATP-dependent chaperone ClpB"/>
    <property type="match status" value="1"/>
</dbReference>
<dbReference type="FunFam" id="3.40.50.300:FF:000025">
    <property type="entry name" value="ATP-dependent Clp protease subunit"/>
    <property type="match status" value="1"/>
</dbReference>
<dbReference type="FunFam" id="3.40.50.300:FF:000010">
    <property type="entry name" value="Chaperone clpB 1, putative"/>
    <property type="match status" value="1"/>
</dbReference>
<dbReference type="Gene3D" id="1.10.8.60">
    <property type="match status" value="1"/>
</dbReference>
<dbReference type="Gene3D" id="1.10.1780.10">
    <property type="entry name" value="Clp, N-terminal domain"/>
    <property type="match status" value="1"/>
</dbReference>
<dbReference type="Gene3D" id="3.40.50.300">
    <property type="entry name" value="P-loop containing nucleotide triphosphate hydrolases"/>
    <property type="match status" value="3"/>
</dbReference>
<dbReference type="InterPro" id="IPR003593">
    <property type="entry name" value="AAA+_ATPase"/>
</dbReference>
<dbReference type="InterPro" id="IPR003959">
    <property type="entry name" value="ATPase_AAA_core"/>
</dbReference>
<dbReference type="InterPro" id="IPR017730">
    <property type="entry name" value="Chaperonin_ClpB"/>
</dbReference>
<dbReference type="InterPro" id="IPR019489">
    <property type="entry name" value="Clp_ATPase_C"/>
</dbReference>
<dbReference type="InterPro" id="IPR036628">
    <property type="entry name" value="Clp_N_dom_sf"/>
</dbReference>
<dbReference type="InterPro" id="IPR004176">
    <property type="entry name" value="Clp_R_dom"/>
</dbReference>
<dbReference type="InterPro" id="IPR001270">
    <property type="entry name" value="ClpA/B"/>
</dbReference>
<dbReference type="InterPro" id="IPR018368">
    <property type="entry name" value="ClpA/B_CS1"/>
</dbReference>
<dbReference type="InterPro" id="IPR028299">
    <property type="entry name" value="ClpA/B_CS2"/>
</dbReference>
<dbReference type="InterPro" id="IPR041546">
    <property type="entry name" value="ClpA/ClpB_AAA_lid"/>
</dbReference>
<dbReference type="InterPro" id="IPR050130">
    <property type="entry name" value="ClpA_ClpB"/>
</dbReference>
<dbReference type="InterPro" id="IPR027417">
    <property type="entry name" value="P-loop_NTPase"/>
</dbReference>
<dbReference type="NCBIfam" id="TIGR03346">
    <property type="entry name" value="chaperone_ClpB"/>
    <property type="match status" value="1"/>
</dbReference>
<dbReference type="PANTHER" id="PTHR11638">
    <property type="entry name" value="ATP-DEPENDENT CLP PROTEASE"/>
    <property type="match status" value="1"/>
</dbReference>
<dbReference type="PANTHER" id="PTHR11638:SF18">
    <property type="entry name" value="HEAT SHOCK PROTEIN 104"/>
    <property type="match status" value="1"/>
</dbReference>
<dbReference type="Pfam" id="PF00004">
    <property type="entry name" value="AAA"/>
    <property type="match status" value="1"/>
</dbReference>
<dbReference type="Pfam" id="PF07724">
    <property type="entry name" value="AAA_2"/>
    <property type="match status" value="1"/>
</dbReference>
<dbReference type="Pfam" id="PF17871">
    <property type="entry name" value="AAA_lid_9"/>
    <property type="match status" value="1"/>
</dbReference>
<dbReference type="Pfam" id="PF02861">
    <property type="entry name" value="Clp_N"/>
    <property type="match status" value="2"/>
</dbReference>
<dbReference type="Pfam" id="PF10431">
    <property type="entry name" value="ClpB_D2-small"/>
    <property type="match status" value="1"/>
</dbReference>
<dbReference type="PRINTS" id="PR00300">
    <property type="entry name" value="CLPPROTEASEA"/>
</dbReference>
<dbReference type="SMART" id="SM00382">
    <property type="entry name" value="AAA"/>
    <property type="match status" value="2"/>
</dbReference>
<dbReference type="SMART" id="SM01086">
    <property type="entry name" value="ClpB_D2-small"/>
    <property type="match status" value="1"/>
</dbReference>
<dbReference type="SUPFAM" id="SSF81923">
    <property type="entry name" value="Double Clp-N motif"/>
    <property type="match status" value="1"/>
</dbReference>
<dbReference type="SUPFAM" id="SSF52540">
    <property type="entry name" value="P-loop containing nucleoside triphosphate hydrolases"/>
    <property type="match status" value="2"/>
</dbReference>
<dbReference type="PROSITE" id="PS51903">
    <property type="entry name" value="CLP_R"/>
    <property type="match status" value="1"/>
</dbReference>
<dbReference type="PROSITE" id="PS00870">
    <property type="entry name" value="CLPAB_1"/>
    <property type="match status" value="1"/>
</dbReference>
<dbReference type="PROSITE" id="PS00871">
    <property type="entry name" value="CLPAB_2"/>
    <property type="match status" value="1"/>
</dbReference>
<protein>
    <recommendedName>
        <fullName>Chaperone protein ClpB</fullName>
    </recommendedName>
</protein>
<feature type="chain" id="PRO_0000191112" description="Chaperone protein ClpB">
    <location>
        <begin position="1"/>
        <end position="866"/>
    </location>
</feature>
<feature type="domain" description="Clp R" evidence="2">
    <location>
        <begin position="3"/>
        <end position="151"/>
    </location>
</feature>
<feature type="region of interest" description="Repeat 1" evidence="2">
    <location>
        <begin position="6"/>
        <end position="71"/>
    </location>
</feature>
<feature type="region of interest" description="Repeat 2" evidence="2">
    <location>
        <begin position="86"/>
        <end position="151"/>
    </location>
</feature>
<feature type="region of interest" description="NBD1" evidence="1">
    <location>
        <begin position="164"/>
        <end position="345"/>
    </location>
</feature>
<feature type="region of interest" description="Linker" evidence="1">
    <location>
        <begin position="346"/>
        <end position="552"/>
    </location>
</feature>
<feature type="region of interest" description="NBD2" evidence="1">
    <location>
        <begin position="562"/>
        <end position="773"/>
    </location>
</feature>
<feature type="region of interest" description="C-terminal" evidence="1">
    <location>
        <begin position="774"/>
        <end position="866"/>
    </location>
</feature>
<feature type="coiled-coil region" evidence="1">
    <location>
        <begin position="396"/>
        <end position="530"/>
    </location>
</feature>
<feature type="binding site" evidence="1">
    <location>
        <begin position="211"/>
        <end position="218"/>
    </location>
    <ligand>
        <name>ATP</name>
        <dbReference type="ChEBI" id="CHEBI:30616"/>
        <label>1</label>
    </ligand>
</feature>
<feature type="binding site" evidence="1">
    <location>
        <begin position="612"/>
        <end position="619"/>
    </location>
    <ligand>
        <name>ATP</name>
        <dbReference type="ChEBI" id="CHEBI:30616"/>
        <label>2</label>
    </ligand>
</feature>
<gene>
    <name type="primary">clpB</name>
    <name type="ordered locus">CPE1428</name>
</gene>
<reference key="1">
    <citation type="journal article" date="2002" name="Proc. Natl. Acad. Sci. U.S.A.">
        <title>Complete genome sequence of Clostridium perfringens, an anaerobic flesh-eater.</title>
        <authorList>
            <person name="Shimizu T."/>
            <person name="Ohtani K."/>
            <person name="Hirakawa H."/>
            <person name="Ohshima K."/>
            <person name="Yamashita A."/>
            <person name="Shiba T."/>
            <person name="Ogasawara N."/>
            <person name="Hattori M."/>
            <person name="Kuhara S."/>
            <person name="Hayashi H."/>
        </authorList>
    </citation>
    <scope>NUCLEOTIDE SEQUENCE [LARGE SCALE GENOMIC DNA]</scope>
    <source>
        <strain>13 / Type A</strain>
    </source>
</reference>
<sequence>MNADKMTLRVQQSLNDAYEIAVKYNNQQLDIIHLFSALVNQKDGLIPNIFEKMGVNIDSLKRDIHVQIDRMPKVLGEAAQSSGVTATRRINEVLIKAEEISKQFEDSYISVEHVMLAMIDIDKNGAVGEILRKNNITKDGFLKVLNEVRGSQRVDSQDPEGTYEALDKYGTNLIELVKQHKLDPVIGRDEEIRRAVRILSRKTKNNPILIGEPGVGKTAIVEGLAERIVRGDVPEGLKDKVIISLDMGALIAGAKYRGEFEERLKAVLKEVQSSEGKILLFIDEIHTIVGAGKTDGAMDAGNLIKPMLARGELHCIGATTFDEYRQYIEKDKALERRFQPVIVEEPTVEETVSILRGLKERFEIHHGIRIHDSAIVAAAKLSHRYIQDRYLPDKAIDLIDEAGAMIRSEIDSLPTELDIIRRKILMLETEKEALSKENDDASKERLVALEKELAELQDKNDEMTIKYEKEKSHISAVRDLKAELDEARGLAEKYEREYDLNKVAELKYGKIPELERKIKEQEASMEKDNENALLKEEVTENEISEIISKWTGIPVTKLVESEREKLLRLEEELRERVIGQDEATTAVANAVIRARAGLKDERKPIGSFIFLGPTGVGKTELAKTLARNLFDSEDNIVRIDMSEYMEKHAVSRLIGPPPGYVGYEEGGQLTEAVRRNPYSVILFDEIEKAHDDVFNLFLQILDDGRLTDNKGKTVDFKNTIIIMTSNIGSGYLLENKSGEGIEDDIRENVMNEMKLRFKPEFLNRVDDIIMFRPLSSEGIKKIIDIFLRDVENRLRERNITLEVTDRAKEILAEEGYDPVYGARPLKRYISNVLETEIAKKIIAGEIYDGSVALIDGVDGKIIVSRK</sequence>
<accession>Q8XKG8</accession>
<comment type="function">
    <text evidence="1">Part of a stress-induced multi-chaperone system, it is involved in the recovery of the cell from heat-induced damage, in cooperation with DnaK, DnaJ and GrpE. Acts before DnaK, in the processing of protein aggregates. Protein binding stimulates the ATPase activity; ATP hydrolysis unfolds the denatured protein aggregates, which probably helps expose new hydrophobic binding sites on the surface of ClpB-bound aggregates, contributing to the solubilization and refolding of denatured protein aggregates by DnaK (By similarity).</text>
</comment>
<comment type="subunit">
    <text evidence="1">Homohexamer. The oligomerization is ATP-dependent (By similarity).</text>
</comment>
<comment type="subcellular location">
    <subcellularLocation>
        <location evidence="3">Cytoplasm</location>
    </subcellularLocation>
</comment>
<comment type="domain">
    <text evidence="1">The Clp repeat (R) domain probably functions as a substrate-discriminating domain, recruiting aggregated proteins to the ClpB hexamer and/or stabilizing bound proteins. The NBD2 domain is responsible for oligomerization, whereas the NBD1 domain stabilizes the hexamer probably in an ATP-dependent manner. The movement of the coiled-coil domain is essential for ClpB ability to rescue proteins from an aggregated state, probably by pulling apart large aggregated proteins, which are bound between the coiled-coils motifs of adjacent ClpB subunits in the functional hexamer (By similarity).</text>
</comment>
<comment type="similarity">
    <text evidence="3">Belongs to the ClpA/ClpB family.</text>
</comment>
<proteinExistence type="inferred from homology"/>
<name>CLPB_CLOPE</name>
<organism>
    <name type="scientific">Clostridium perfringens (strain 13 / Type A)</name>
    <dbReference type="NCBI Taxonomy" id="195102"/>
    <lineage>
        <taxon>Bacteria</taxon>
        <taxon>Bacillati</taxon>
        <taxon>Bacillota</taxon>
        <taxon>Clostridia</taxon>
        <taxon>Eubacteriales</taxon>
        <taxon>Clostridiaceae</taxon>
        <taxon>Clostridium</taxon>
    </lineage>
</organism>
<keyword id="KW-0067">ATP-binding</keyword>
<keyword id="KW-0143">Chaperone</keyword>
<keyword id="KW-0175">Coiled coil</keyword>
<keyword id="KW-0963">Cytoplasm</keyword>
<keyword id="KW-0547">Nucleotide-binding</keyword>
<keyword id="KW-1185">Reference proteome</keyword>
<keyword id="KW-0677">Repeat</keyword>
<keyword id="KW-0346">Stress response</keyword>
<evidence type="ECO:0000250" key="1"/>
<evidence type="ECO:0000255" key="2">
    <source>
        <dbReference type="PROSITE-ProRule" id="PRU01251"/>
    </source>
</evidence>
<evidence type="ECO:0000305" key="3"/>